<organism>
    <name type="scientific">Edwardsiella ictaluri (strain 93-146)</name>
    <dbReference type="NCBI Taxonomy" id="634503"/>
    <lineage>
        <taxon>Bacteria</taxon>
        <taxon>Pseudomonadati</taxon>
        <taxon>Pseudomonadota</taxon>
        <taxon>Gammaproteobacteria</taxon>
        <taxon>Enterobacterales</taxon>
        <taxon>Hafniaceae</taxon>
        <taxon>Edwardsiella</taxon>
    </lineage>
</organism>
<evidence type="ECO:0000255" key="1">
    <source>
        <dbReference type="HAMAP-Rule" id="MF_01518"/>
    </source>
</evidence>
<feature type="chain" id="PRO_1000215361" description="Adenine deaminase">
    <location>
        <begin position="1"/>
        <end position="591"/>
    </location>
</feature>
<dbReference type="EC" id="3.5.4.2" evidence="1"/>
<dbReference type="EMBL" id="CP001600">
    <property type="protein sequence ID" value="ACR71035.1"/>
    <property type="molecule type" value="Genomic_DNA"/>
</dbReference>
<dbReference type="SMR" id="C5BF52"/>
<dbReference type="STRING" id="67780.B6E78_11140"/>
<dbReference type="KEGG" id="eic:NT01EI_3924"/>
<dbReference type="PATRIC" id="fig|634503.3.peg.3495"/>
<dbReference type="HOGENOM" id="CLU_027935_0_0_6"/>
<dbReference type="OrthoDB" id="9766983at2"/>
<dbReference type="Proteomes" id="UP000001485">
    <property type="component" value="Chromosome"/>
</dbReference>
<dbReference type="GO" id="GO:0000034">
    <property type="term" value="F:adenine deaminase activity"/>
    <property type="evidence" value="ECO:0007669"/>
    <property type="project" value="UniProtKB-UniRule"/>
</dbReference>
<dbReference type="GO" id="GO:0006146">
    <property type="term" value="P:adenine catabolic process"/>
    <property type="evidence" value="ECO:0007669"/>
    <property type="project" value="InterPro"/>
</dbReference>
<dbReference type="CDD" id="cd01295">
    <property type="entry name" value="AdeC"/>
    <property type="match status" value="1"/>
</dbReference>
<dbReference type="FunFam" id="3.20.20.140:FF:000016">
    <property type="entry name" value="Adenine deaminase"/>
    <property type="match status" value="1"/>
</dbReference>
<dbReference type="Gene3D" id="3.20.20.140">
    <property type="entry name" value="Metal-dependent hydrolases"/>
    <property type="match status" value="1"/>
</dbReference>
<dbReference type="Gene3D" id="2.30.40.10">
    <property type="entry name" value="Urease, subunit C, domain 1"/>
    <property type="match status" value="1"/>
</dbReference>
<dbReference type="HAMAP" id="MF_01518">
    <property type="entry name" value="Adenine_deamin"/>
    <property type="match status" value="1"/>
</dbReference>
<dbReference type="InterPro" id="IPR006679">
    <property type="entry name" value="Adenine_deam"/>
</dbReference>
<dbReference type="InterPro" id="IPR026912">
    <property type="entry name" value="Adenine_deam_C"/>
</dbReference>
<dbReference type="InterPro" id="IPR006680">
    <property type="entry name" value="Amidohydro-rel"/>
</dbReference>
<dbReference type="InterPro" id="IPR011059">
    <property type="entry name" value="Metal-dep_hydrolase_composite"/>
</dbReference>
<dbReference type="InterPro" id="IPR032466">
    <property type="entry name" value="Metal_Hydrolase"/>
</dbReference>
<dbReference type="NCBIfam" id="TIGR01178">
    <property type="entry name" value="ade"/>
    <property type="match status" value="1"/>
</dbReference>
<dbReference type="NCBIfam" id="NF007457">
    <property type="entry name" value="PRK10027.1"/>
    <property type="match status" value="1"/>
</dbReference>
<dbReference type="PANTHER" id="PTHR11113:SF2">
    <property type="entry name" value="ADENINE DEAMINASE"/>
    <property type="match status" value="1"/>
</dbReference>
<dbReference type="PANTHER" id="PTHR11113">
    <property type="entry name" value="N-ACETYLGLUCOSAMINE-6-PHOSPHATE DEACETYLASE"/>
    <property type="match status" value="1"/>
</dbReference>
<dbReference type="Pfam" id="PF13382">
    <property type="entry name" value="Adenine_deam_C"/>
    <property type="match status" value="1"/>
</dbReference>
<dbReference type="Pfam" id="PF01979">
    <property type="entry name" value="Amidohydro_1"/>
    <property type="match status" value="1"/>
</dbReference>
<dbReference type="SUPFAM" id="SSF51338">
    <property type="entry name" value="Composite domain of metallo-dependent hydrolases"/>
    <property type="match status" value="1"/>
</dbReference>
<dbReference type="SUPFAM" id="SSF51556">
    <property type="entry name" value="Metallo-dependent hydrolases"/>
    <property type="match status" value="1"/>
</dbReference>
<keyword id="KW-0378">Hydrolase</keyword>
<keyword id="KW-0464">Manganese</keyword>
<proteinExistence type="inferred from homology"/>
<gene>
    <name evidence="1" type="primary">ade</name>
    <name type="ordered locus">NT01EI_3924</name>
</gene>
<sequence length="591" mass="63675">MEDIHHKHTQSVSRSDMLRLLAVSRGDQPADLIIDNVFLLDLINGGTLPGPILISGDSIAGVGPAYAGTAALERIDAGGAIAVPGFIDAHLHIESSMMTPIAFESVTLPLGVTTIVCDPHEIVNVMGEKGLTWFLRCAEGAQQNQFIQISSCVPALAGTDINGAEFPLTAMLPYREHPHVLGLAEMMNFPGVIAGDEPTLDKLDAFRHLTLDGHSPMLSGKALNAYLAAGVENCHETLALEEGREKLALGMALMIREGSAARNLDTLAPLISEFNSPQCMLCTDDRNPWEIAHEGHIDALIRRLIQRHHIAPHVAYRVASWSAARHFGLKRLGLIAPGKKADIVLLDNLEQVAIRQVFAGGKAIDAQQLLRSAAMRQLASCPPQHNTLRRAPLSAEDLTLPLTQDADYRAIQLIPNELITPARTVRWLGDGFDTPDVCRIAVMERYGQQRVPALGLLHNSGLSKGALAATVSHDSHNIVVIGHHPAEMALAVNQLIDDGGGLCVVADGQVVVHLPLPIAGLMSSRSAAEIADIIDALKQACRNCGMTLNEPFIQMAFLSLPVIPSLKLTSLGLYDVDHFRFTEVRIPEESA</sequence>
<accession>C5BF52</accession>
<protein>
    <recommendedName>
        <fullName evidence="1">Adenine deaminase</fullName>
        <shortName evidence="1">Adenase</shortName>
        <shortName evidence="1">Adenine aminase</shortName>
        <ecNumber evidence="1">3.5.4.2</ecNumber>
    </recommendedName>
</protein>
<reference key="1">
    <citation type="submission" date="2009-03" db="EMBL/GenBank/DDBJ databases">
        <title>Complete genome sequence of Edwardsiella ictaluri 93-146.</title>
        <authorList>
            <person name="Williams M.L."/>
            <person name="Gillaspy A.F."/>
            <person name="Dyer D.W."/>
            <person name="Thune R.L."/>
            <person name="Waldbieser G.C."/>
            <person name="Schuster S.C."/>
            <person name="Gipson J."/>
            <person name="Zaitshik J."/>
            <person name="Landry C."/>
            <person name="Lawrence M.L."/>
        </authorList>
    </citation>
    <scope>NUCLEOTIDE SEQUENCE [LARGE SCALE GENOMIC DNA]</scope>
    <source>
        <strain>93-146</strain>
    </source>
</reference>
<comment type="catalytic activity">
    <reaction evidence="1">
        <text>adenine + H2O + H(+) = hypoxanthine + NH4(+)</text>
        <dbReference type="Rhea" id="RHEA:23688"/>
        <dbReference type="ChEBI" id="CHEBI:15377"/>
        <dbReference type="ChEBI" id="CHEBI:15378"/>
        <dbReference type="ChEBI" id="CHEBI:16708"/>
        <dbReference type="ChEBI" id="CHEBI:17368"/>
        <dbReference type="ChEBI" id="CHEBI:28938"/>
        <dbReference type="EC" id="3.5.4.2"/>
    </reaction>
</comment>
<comment type="cofactor">
    <cofactor evidence="1">
        <name>Mn(2+)</name>
        <dbReference type="ChEBI" id="CHEBI:29035"/>
    </cofactor>
</comment>
<comment type="subunit">
    <text evidence="1">Homodimer.</text>
</comment>
<comment type="similarity">
    <text evidence="1">Belongs to the metallo-dependent hydrolases superfamily. Adenine deaminase family.</text>
</comment>
<name>ADEC_EDWI9</name>